<dbReference type="EMBL" id="AE000657">
    <property type="protein sequence ID" value="AAC07136.1"/>
    <property type="molecule type" value="Genomic_DNA"/>
</dbReference>
<dbReference type="PIR" id="H70392">
    <property type="entry name" value="H70392"/>
</dbReference>
<dbReference type="RefSeq" id="NP_213734.1">
    <property type="nucleotide sequence ID" value="NC_000918.1"/>
</dbReference>
<dbReference type="SMR" id="O67171"/>
<dbReference type="STRING" id="224324.aq_1078"/>
<dbReference type="EnsemblBacteria" id="AAC07136">
    <property type="protein sequence ID" value="AAC07136"/>
    <property type="gene ID" value="aq_1078"/>
</dbReference>
<dbReference type="KEGG" id="aae:aq_1078"/>
<dbReference type="PATRIC" id="fig|224324.8.peg.838"/>
<dbReference type="eggNOG" id="COG1835">
    <property type="taxonomic scope" value="Bacteria"/>
</dbReference>
<dbReference type="HOGENOM" id="CLU_1248501_0_0_0"/>
<dbReference type="InParanoid" id="O67171"/>
<dbReference type="OrthoDB" id="9796461at2"/>
<dbReference type="Proteomes" id="UP000000798">
    <property type="component" value="Chromosome"/>
</dbReference>
<dbReference type="GO" id="GO:0005886">
    <property type="term" value="C:plasma membrane"/>
    <property type="evidence" value="ECO:0007669"/>
    <property type="project" value="UniProtKB-SubCell"/>
</dbReference>
<dbReference type="GO" id="GO:0016747">
    <property type="term" value="F:acyltransferase activity, transferring groups other than amino-acyl groups"/>
    <property type="evidence" value="ECO:0007669"/>
    <property type="project" value="InterPro"/>
</dbReference>
<dbReference type="InterPro" id="IPR002656">
    <property type="entry name" value="Acyl_transf_3_dom"/>
</dbReference>
<dbReference type="Pfam" id="PF01757">
    <property type="entry name" value="Acyl_transf_3"/>
    <property type="match status" value="1"/>
</dbReference>
<name>Y1078_AQUAE</name>
<keyword id="KW-1003">Cell membrane</keyword>
<keyword id="KW-0472">Membrane</keyword>
<keyword id="KW-1185">Reference proteome</keyword>
<keyword id="KW-0812">Transmembrane</keyword>
<keyword id="KW-1133">Transmembrane helix</keyword>
<comment type="subcellular location">
    <subcellularLocation>
        <location evidence="2">Cell membrane</location>
        <topology evidence="2">Multi-pass membrane protein</topology>
    </subcellularLocation>
</comment>
<protein>
    <recommendedName>
        <fullName>Uncharacterized protein aq_1078</fullName>
    </recommendedName>
</protein>
<accession>O67171</accession>
<proteinExistence type="predicted"/>
<feature type="chain" id="PRO_0000186899" description="Uncharacterized protein aq_1078">
    <location>
        <begin position="1"/>
        <end position="221"/>
    </location>
</feature>
<feature type="transmembrane region" description="Helical" evidence="1">
    <location>
        <begin position="33"/>
        <end position="55"/>
    </location>
</feature>
<feature type="transmembrane region" description="Helical" evidence="1">
    <location>
        <begin position="70"/>
        <end position="92"/>
    </location>
</feature>
<feature type="transmembrane region" description="Helical" evidence="1">
    <location>
        <begin position="99"/>
        <end position="121"/>
    </location>
</feature>
<feature type="transmembrane region" description="Helical" evidence="1">
    <location>
        <begin position="125"/>
        <end position="147"/>
    </location>
</feature>
<feature type="transmembrane region" description="Helical" evidence="1">
    <location>
        <begin position="154"/>
        <end position="176"/>
    </location>
</feature>
<feature type="transmembrane region" description="Helical" evidence="1">
    <location>
        <begin position="186"/>
        <end position="208"/>
    </location>
</feature>
<organism>
    <name type="scientific">Aquifex aeolicus (strain VF5)</name>
    <dbReference type="NCBI Taxonomy" id="224324"/>
    <lineage>
        <taxon>Bacteria</taxon>
        <taxon>Pseudomonadati</taxon>
        <taxon>Aquificota</taxon>
        <taxon>Aquificia</taxon>
        <taxon>Aquificales</taxon>
        <taxon>Aquificaceae</taxon>
        <taxon>Aquifex</taxon>
    </lineage>
</organism>
<evidence type="ECO:0000255" key="1"/>
<evidence type="ECO:0000305" key="2"/>
<gene>
    <name type="ordered locus">aq_1078</name>
</gene>
<sequence>MYLENCIVILTSTTPPWWAIPPAWSLGAEIQAYFLLPILLTYKMLGLSVFWISYIIYSLANLNIIHSDYFGYRLIPGVIFMFLSGAYLQKIVSGKASRLEMLSLIIIYIISLFWLVFFIIIKGKYGAYTRETLLGLLVGIPLVYTLLKIRRKFYFNDLFGKLSYGIFLSHFLSFWILEFVNLTQNIISMIFLSLIISASVSYLIITLIENKVEKIRYNLTR</sequence>
<reference key="1">
    <citation type="journal article" date="1998" name="Nature">
        <title>The complete genome of the hyperthermophilic bacterium Aquifex aeolicus.</title>
        <authorList>
            <person name="Deckert G."/>
            <person name="Warren P.V."/>
            <person name="Gaasterland T."/>
            <person name="Young W.G."/>
            <person name="Lenox A.L."/>
            <person name="Graham D.E."/>
            <person name="Overbeek R."/>
            <person name="Snead M.A."/>
            <person name="Keller M."/>
            <person name="Aujay M."/>
            <person name="Huber R."/>
            <person name="Feldman R.A."/>
            <person name="Short J.M."/>
            <person name="Olsen G.J."/>
            <person name="Swanson R.V."/>
        </authorList>
    </citation>
    <scope>NUCLEOTIDE SEQUENCE [LARGE SCALE GENOMIC DNA]</scope>
    <source>
        <strain>VF5</strain>
    </source>
</reference>